<feature type="chain" id="PRO_1000074093" description="Holliday junction branch migration complex subunit RuvB">
    <location>
        <begin position="1"/>
        <end position="346"/>
    </location>
</feature>
<feature type="region of interest" description="Large ATPase domain (RuvB-L)" evidence="1">
    <location>
        <begin position="1"/>
        <end position="182"/>
    </location>
</feature>
<feature type="region of interest" description="Small ATPAse domain (RuvB-S)" evidence="1">
    <location>
        <begin position="183"/>
        <end position="253"/>
    </location>
</feature>
<feature type="region of interest" description="Head domain (RuvB-H)" evidence="1">
    <location>
        <begin position="256"/>
        <end position="346"/>
    </location>
</feature>
<feature type="binding site" evidence="1">
    <location>
        <position position="21"/>
    </location>
    <ligand>
        <name>ATP</name>
        <dbReference type="ChEBI" id="CHEBI:30616"/>
    </ligand>
</feature>
<feature type="binding site" evidence="1">
    <location>
        <position position="22"/>
    </location>
    <ligand>
        <name>ATP</name>
        <dbReference type="ChEBI" id="CHEBI:30616"/>
    </ligand>
</feature>
<feature type="binding site" evidence="1">
    <location>
        <position position="63"/>
    </location>
    <ligand>
        <name>ATP</name>
        <dbReference type="ChEBI" id="CHEBI:30616"/>
    </ligand>
</feature>
<feature type="binding site" evidence="1">
    <location>
        <position position="66"/>
    </location>
    <ligand>
        <name>ATP</name>
        <dbReference type="ChEBI" id="CHEBI:30616"/>
    </ligand>
</feature>
<feature type="binding site" evidence="1">
    <location>
        <position position="67"/>
    </location>
    <ligand>
        <name>ATP</name>
        <dbReference type="ChEBI" id="CHEBI:30616"/>
    </ligand>
</feature>
<feature type="binding site" evidence="1">
    <location>
        <position position="67"/>
    </location>
    <ligand>
        <name>Mg(2+)</name>
        <dbReference type="ChEBI" id="CHEBI:18420"/>
    </ligand>
</feature>
<feature type="binding site" evidence="1">
    <location>
        <position position="68"/>
    </location>
    <ligand>
        <name>ATP</name>
        <dbReference type="ChEBI" id="CHEBI:30616"/>
    </ligand>
</feature>
<feature type="binding site" evidence="1">
    <location>
        <begin position="129"/>
        <end position="131"/>
    </location>
    <ligand>
        <name>ATP</name>
        <dbReference type="ChEBI" id="CHEBI:30616"/>
    </ligand>
</feature>
<feature type="binding site" evidence="1">
    <location>
        <position position="172"/>
    </location>
    <ligand>
        <name>ATP</name>
        <dbReference type="ChEBI" id="CHEBI:30616"/>
    </ligand>
</feature>
<feature type="binding site" evidence="1">
    <location>
        <position position="182"/>
    </location>
    <ligand>
        <name>ATP</name>
        <dbReference type="ChEBI" id="CHEBI:30616"/>
    </ligand>
</feature>
<feature type="binding site" evidence="1">
    <location>
        <position position="219"/>
    </location>
    <ligand>
        <name>ATP</name>
        <dbReference type="ChEBI" id="CHEBI:30616"/>
    </ligand>
</feature>
<feature type="binding site" evidence="1">
    <location>
        <position position="311"/>
    </location>
    <ligand>
        <name>DNA</name>
        <dbReference type="ChEBI" id="CHEBI:16991"/>
    </ligand>
</feature>
<feature type="binding site" evidence="1">
    <location>
        <position position="316"/>
    </location>
    <ligand>
        <name>DNA</name>
        <dbReference type="ChEBI" id="CHEBI:16991"/>
    </ligand>
</feature>
<dbReference type="EC" id="3.6.4.-" evidence="1"/>
<dbReference type="EMBL" id="CP000607">
    <property type="protein sequence ID" value="ABP37420.1"/>
    <property type="molecule type" value="Genomic_DNA"/>
</dbReference>
<dbReference type="SMR" id="A4SG11"/>
<dbReference type="STRING" id="290318.Cvib_1409"/>
<dbReference type="KEGG" id="pvi:Cvib_1409"/>
<dbReference type="eggNOG" id="COG2255">
    <property type="taxonomic scope" value="Bacteria"/>
</dbReference>
<dbReference type="HOGENOM" id="CLU_055599_1_0_10"/>
<dbReference type="OrthoDB" id="9804478at2"/>
<dbReference type="GO" id="GO:0005737">
    <property type="term" value="C:cytoplasm"/>
    <property type="evidence" value="ECO:0007669"/>
    <property type="project" value="UniProtKB-SubCell"/>
</dbReference>
<dbReference type="GO" id="GO:0048476">
    <property type="term" value="C:Holliday junction resolvase complex"/>
    <property type="evidence" value="ECO:0007669"/>
    <property type="project" value="UniProtKB-UniRule"/>
</dbReference>
<dbReference type="GO" id="GO:0005524">
    <property type="term" value="F:ATP binding"/>
    <property type="evidence" value="ECO:0007669"/>
    <property type="project" value="UniProtKB-UniRule"/>
</dbReference>
<dbReference type="GO" id="GO:0016887">
    <property type="term" value="F:ATP hydrolysis activity"/>
    <property type="evidence" value="ECO:0007669"/>
    <property type="project" value="InterPro"/>
</dbReference>
<dbReference type="GO" id="GO:0000400">
    <property type="term" value="F:four-way junction DNA binding"/>
    <property type="evidence" value="ECO:0007669"/>
    <property type="project" value="UniProtKB-UniRule"/>
</dbReference>
<dbReference type="GO" id="GO:0009378">
    <property type="term" value="F:four-way junction helicase activity"/>
    <property type="evidence" value="ECO:0007669"/>
    <property type="project" value="InterPro"/>
</dbReference>
<dbReference type="GO" id="GO:0006310">
    <property type="term" value="P:DNA recombination"/>
    <property type="evidence" value="ECO:0007669"/>
    <property type="project" value="UniProtKB-UniRule"/>
</dbReference>
<dbReference type="GO" id="GO:0006281">
    <property type="term" value="P:DNA repair"/>
    <property type="evidence" value="ECO:0007669"/>
    <property type="project" value="UniProtKB-UniRule"/>
</dbReference>
<dbReference type="CDD" id="cd00009">
    <property type="entry name" value="AAA"/>
    <property type="match status" value="1"/>
</dbReference>
<dbReference type="Gene3D" id="1.10.8.60">
    <property type="match status" value="1"/>
</dbReference>
<dbReference type="Gene3D" id="3.40.50.300">
    <property type="entry name" value="P-loop containing nucleotide triphosphate hydrolases"/>
    <property type="match status" value="1"/>
</dbReference>
<dbReference type="Gene3D" id="1.10.10.10">
    <property type="entry name" value="Winged helix-like DNA-binding domain superfamily/Winged helix DNA-binding domain"/>
    <property type="match status" value="1"/>
</dbReference>
<dbReference type="HAMAP" id="MF_00016">
    <property type="entry name" value="DNA_HJ_migration_RuvB"/>
    <property type="match status" value="1"/>
</dbReference>
<dbReference type="InterPro" id="IPR003593">
    <property type="entry name" value="AAA+_ATPase"/>
</dbReference>
<dbReference type="InterPro" id="IPR041445">
    <property type="entry name" value="AAA_lid_4"/>
</dbReference>
<dbReference type="InterPro" id="IPR000641">
    <property type="entry name" value="CbxX/CfxQ"/>
</dbReference>
<dbReference type="InterPro" id="IPR004605">
    <property type="entry name" value="DNA_helicase_Holl-junc_RuvB"/>
</dbReference>
<dbReference type="InterPro" id="IPR027417">
    <property type="entry name" value="P-loop_NTPase"/>
</dbReference>
<dbReference type="InterPro" id="IPR008824">
    <property type="entry name" value="RuvB-like_N"/>
</dbReference>
<dbReference type="InterPro" id="IPR008823">
    <property type="entry name" value="RuvB_C"/>
</dbReference>
<dbReference type="InterPro" id="IPR036388">
    <property type="entry name" value="WH-like_DNA-bd_sf"/>
</dbReference>
<dbReference type="InterPro" id="IPR036390">
    <property type="entry name" value="WH_DNA-bd_sf"/>
</dbReference>
<dbReference type="NCBIfam" id="NF000868">
    <property type="entry name" value="PRK00080.1"/>
    <property type="match status" value="1"/>
</dbReference>
<dbReference type="NCBIfam" id="TIGR00635">
    <property type="entry name" value="ruvB"/>
    <property type="match status" value="1"/>
</dbReference>
<dbReference type="PANTHER" id="PTHR42848">
    <property type="match status" value="1"/>
</dbReference>
<dbReference type="PANTHER" id="PTHR42848:SF1">
    <property type="entry name" value="HOLLIDAY JUNCTION BRANCH MIGRATION COMPLEX SUBUNIT RUVB"/>
    <property type="match status" value="1"/>
</dbReference>
<dbReference type="Pfam" id="PF17864">
    <property type="entry name" value="AAA_lid_4"/>
    <property type="match status" value="1"/>
</dbReference>
<dbReference type="Pfam" id="PF05491">
    <property type="entry name" value="RuvB_C"/>
    <property type="match status" value="1"/>
</dbReference>
<dbReference type="Pfam" id="PF05496">
    <property type="entry name" value="RuvB_N"/>
    <property type="match status" value="1"/>
</dbReference>
<dbReference type="PRINTS" id="PR00819">
    <property type="entry name" value="CBXCFQXSUPER"/>
</dbReference>
<dbReference type="SMART" id="SM00382">
    <property type="entry name" value="AAA"/>
    <property type="match status" value="1"/>
</dbReference>
<dbReference type="SUPFAM" id="SSF52540">
    <property type="entry name" value="P-loop containing nucleoside triphosphate hydrolases"/>
    <property type="match status" value="1"/>
</dbReference>
<dbReference type="SUPFAM" id="SSF46785">
    <property type="entry name" value="Winged helix' DNA-binding domain"/>
    <property type="match status" value="1"/>
</dbReference>
<reference key="1">
    <citation type="submission" date="2007-03" db="EMBL/GenBank/DDBJ databases">
        <title>Complete sequence of Prosthecochloris vibrioformis DSM 265.</title>
        <authorList>
            <consortium name="US DOE Joint Genome Institute"/>
            <person name="Copeland A."/>
            <person name="Lucas S."/>
            <person name="Lapidus A."/>
            <person name="Barry K."/>
            <person name="Detter J.C."/>
            <person name="Glavina del Rio T."/>
            <person name="Hammon N."/>
            <person name="Israni S."/>
            <person name="Pitluck S."/>
            <person name="Schmutz J."/>
            <person name="Larimer F."/>
            <person name="Land M."/>
            <person name="Hauser L."/>
            <person name="Mikhailova N."/>
            <person name="Li T."/>
            <person name="Overmann J."/>
            <person name="Schuster S.C."/>
            <person name="Bryant D.A."/>
            <person name="Richardson P."/>
        </authorList>
    </citation>
    <scope>NUCLEOTIDE SEQUENCE [LARGE SCALE GENOMIC DNA]</scope>
    <source>
        <strain>DSM 265 / 1930</strain>
    </source>
</reference>
<keyword id="KW-0067">ATP-binding</keyword>
<keyword id="KW-0963">Cytoplasm</keyword>
<keyword id="KW-0227">DNA damage</keyword>
<keyword id="KW-0233">DNA recombination</keyword>
<keyword id="KW-0234">DNA repair</keyword>
<keyword id="KW-0238">DNA-binding</keyword>
<keyword id="KW-0378">Hydrolase</keyword>
<keyword id="KW-0547">Nucleotide-binding</keyword>
<gene>
    <name evidence="1" type="primary">ruvB</name>
    <name type="ordered locus">Cvib_1409</name>
</gene>
<comment type="function">
    <text evidence="1">The RuvA-RuvB-RuvC complex processes Holliday junction (HJ) DNA during genetic recombination and DNA repair, while the RuvA-RuvB complex plays an important role in the rescue of blocked DNA replication forks via replication fork reversal (RFR). RuvA specifically binds to HJ cruciform DNA, conferring on it an open structure. The RuvB hexamer acts as an ATP-dependent pump, pulling dsDNA into and through the RuvAB complex. RuvB forms 2 homohexamers on either side of HJ DNA bound by 1 or 2 RuvA tetramers; 4 subunits per hexamer contact DNA at a time. Coordinated motions by a converter formed by DNA-disengaged RuvB subunits stimulates ATP hydrolysis and nucleotide exchange. Immobilization of the converter enables RuvB to convert the ATP-contained energy into a lever motion, pulling 2 nucleotides of DNA out of the RuvA tetramer per ATP hydrolyzed, thus driving DNA branch migration. The RuvB motors rotate together with the DNA substrate, which together with the progressing nucleotide cycle form the mechanistic basis for DNA recombination by continuous HJ branch migration. Branch migration allows RuvC to scan DNA until it finds its consensus sequence, where it cleaves and resolves cruciform DNA.</text>
</comment>
<comment type="catalytic activity">
    <reaction evidence="1">
        <text>ATP + H2O = ADP + phosphate + H(+)</text>
        <dbReference type="Rhea" id="RHEA:13065"/>
        <dbReference type="ChEBI" id="CHEBI:15377"/>
        <dbReference type="ChEBI" id="CHEBI:15378"/>
        <dbReference type="ChEBI" id="CHEBI:30616"/>
        <dbReference type="ChEBI" id="CHEBI:43474"/>
        <dbReference type="ChEBI" id="CHEBI:456216"/>
    </reaction>
</comment>
<comment type="subunit">
    <text evidence="1">Homohexamer. Forms an RuvA(8)-RuvB(12)-Holliday junction (HJ) complex. HJ DNA is sandwiched between 2 RuvA tetramers; dsDNA enters through RuvA and exits via RuvB. An RuvB hexamer assembles on each DNA strand where it exits the tetramer. Each RuvB hexamer is contacted by two RuvA subunits (via domain III) on 2 adjacent RuvB subunits; this complex drives branch migration. In the full resolvosome a probable DNA-RuvA(4)-RuvB(12)-RuvC(2) complex forms which resolves the HJ.</text>
</comment>
<comment type="subcellular location">
    <subcellularLocation>
        <location evidence="1">Cytoplasm</location>
    </subcellularLocation>
</comment>
<comment type="domain">
    <text evidence="1">Has 3 domains, the large (RuvB-L) and small ATPase (RuvB-S) domains and the C-terminal head (RuvB-H) domain. The head domain binds DNA, while the ATPase domains jointly bind ATP, ADP or are empty depending on the state of the subunit in the translocation cycle. During a single DNA translocation step the structure of each domain remains the same, but their relative positions change.</text>
</comment>
<comment type="similarity">
    <text evidence="1">Belongs to the RuvB family.</text>
</comment>
<organism>
    <name type="scientific">Chlorobium phaeovibrioides (strain DSM 265 / 1930)</name>
    <name type="common">Prosthecochloris vibrioformis (strain DSM 265)</name>
    <dbReference type="NCBI Taxonomy" id="290318"/>
    <lineage>
        <taxon>Bacteria</taxon>
        <taxon>Pseudomonadati</taxon>
        <taxon>Chlorobiota</taxon>
        <taxon>Chlorobiia</taxon>
        <taxon>Chlorobiales</taxon>
        <taxon>Chlorobiaceae</taxon>
        <taxon>Chlorobium/Pelodictyon group</taxon>
        <taxon>Chlorobium</taxon>
    </lineage>
</organism>
<sequence>MKIELLTTPADAAEVRIEEQIRPARMEDFTGQQRLTDNLKVFISAARMREEALDHVLLSGPPGLGKTTLAHIIAAEMGSSIRATSGPLLDKAGNLAGLLTGLKRGDVLFIDEIHRMPPAVEEYLYSAMEDFRIDIMIDSGPSARAVQLKIEPFTLVGATTRSGLLTSPLRARFGINSRFDYYSPDLLEGIVMRASGILSIGIDQDAASEIAGRSRGTPRIANRLLRRARDFAQVEKAAVISRRIAMKTLECLDIDEEGLDDMDKKIMDTIVNRFSGGPVGVASLAVSVGEEQDTIEEVYEPYLIQAGYLSRTPRGRVATRQALLRFSDGSVSRHTGGLFDADGNLS</sequence>
<accession>A4SG11</accession>
<protein>
    <recommendedName>
        <fullName evidence="1">Holliday junction branch migration complex subunit RuvB</fullName>
        <ecNumber evidence="1">3.6.4.-</ecNumber>
    </recommendedName>
</protein>
<name>RUVB_CHLPM</name>
<evidence type="ECO:0000255" key="1">
    <source>
        <dbReference type="HAMAP-Rule" id="MF_00016"/>
    </source>
</evidence>
<proteinExistence type="inferred from homology"/>